<dbReference type="EC" id="4.2.1.11" evidence="1"/>
<dbReference type="EMBL" id="CP000102">
    <property type="protein sequence ID" value="ABC57251.1"/>
    <property type="molecule type" value="Genomic_DNA"/>
</dbReference>
<dbReference type="RefSeq" id="WP_011406450.1">
    <property type="nucleotide sequence ID" value="NC_007681.1"/>
</dbReference>
<dbReference type="SMR" id="Q2NG02"/>
<dbReference type="STRING" id="339860.Msp_0862"/>
<dbReference type="GeneID" id="41325437"/>
<dbReference type="KEGG" id="mst:Msp_0862"/>
<dbReference type="eggNOG" id="arCOG01169">
    <property type="taxonomic scope" value="Archaea"/>
</dbReference>
<dbReference type="HOGENOM" id="CLU_031223_0_1_2"/>
<dbReference type="OrthoDB" id="8680at2157"/>
<dbReference type="UniPathway" id="UPA00109">
    <property type="reaction ID" value="UER00187"/>
</dbReference>
<dbReference type="Proteomes" id="UP000001931">
    <property type="component" value="Chromosome"/>
</dbReference>
<dbReference type="GO" id="GO:0009986">
    <property type="term" value="C:cell surface"/>
    <property type="evidence" value="ECO:0007669"/>
    <property type="project" value="UniProtKB-SubCell"/>
</dbReference>
<dbReference type="GO" id="GO:0005576">
    <property type="term" value="C:extracellular region"/>
    <property type="evidence" value="ECO:0007669"/>
    <property type="project" value="UniProtKB-SubCell"/>
</dbReference>
<dbReference type="GO" id="GO:0000015">
    <property type="term" value="C:phosphopyruvate hydratase complex"/>
    <property type="evidence" value="ECO:0007669"/>
    <property type="project" value="InterPro"/>
</dbReference>
<dbReference type="GO" id="GO:0000287">
    <property type="term" value="F:magnesium ion binding"/>
    <property type="evidence" value="ECO:0007669"/>
    <property type="project" value="UniProtKB-UniRule"/>
</dbReference>
<dbReference type="GO" id="GO:0004634">
    <property type="term" value="F:phosphopyruvate hydratase activity"/>
    <property type="evidence" value="ECO:0007669"/>
    <property type="project" value="UniProtKB-UniRule"/>
</dbReference>
<dbReference type="GO" id="GO:0006096">
    <property type="term" value="P:glycolytic process"/>
    <property type="evidence" value="ECO:0007669"/>
    <property type="project" value="UniProtKB-UniRule"/>
</dbReference>
<dbReference type="CDD" id="cd03313">
    <property type="entry name" value="enolase"/>
    <property type="match status" value="1"/>
</dbReference>
<dbReference type="Gene3D" id="3.20.20.120">
    <property type="entry name" value="Enolase-like C-terminal domain"/>
    <property type="match status" value="1"/>
</dbReference>
<dbReference type="Gene3D" id="3.30.390.10">
    <property type="entry name" value="Enolase-like, N-terminal domain"/>
    <property type="match status" value="1"/>
</dbReference>
<dbReference type="HAMAP" id="MF_00318">
    <property type="entry name" value="Enolase"/>
    <property type="match status" value="1"/>
</dbReference>
<dbReference type="InterPro" id="IPR000941">
    <property type="entry name" value="Enolase"/>
</dbReference>
<dbReference type="InterPro" id="IPR036849">
    <property type="entry name" value="Enolase-like_C_sf"/>
</dbReference>
<dbReference type="InterPro" id="IPR029017">
    <property type="entry name" value="Enolase-like_N"/>
</dbReference>
<dbReference type="InterPro" id="IPR020810">
    <property type="entry name" value="Enolase_C"/>
</dbReference>
<dbReference type="InterPro" id="IPR020809">
    <property type="entry name" value="Enolase_CS"/>
</dbReference>
<dbReference type="InterPro" id="IPR020811">
    <property type="entry name" value="Enolase_N"/>
</dbReference>
<dbReference type="NCBIfam" id="TIGR01060">
    <property type="entry name" value="eno"/>
    <property type="match status" value="1"/>
</dbReference>
<dbReference type="PANTHER" id="PTHR11902">
    <property type="entry name" value="ENOLASE"/>
    <property type="match status" value="1"/>
</dbReference>
<dbReference type="PANTHER" id="PTHR11902:SF1">
    <property type="entry name" value="ENOLASE"/>
    <property type="match status" value="1"/>
</dbReference>
<dbReference type="Pfam" id="PF00113">
    <property type="entry name" value="Enolase_C"/>
    <property type="match status" value="1"/>
</dbReference>
<dbReference type="Pfam" id="PF03952">
    <property type="entry name" value="Enolase_N"/>
    <property type="match status" value="1"/>
</dbReference>
<dbReference type="PIRSF" id="PIRSF001400">
    <property type="entry name" value="Enolase"/>
    <property type="match status" value="1"/>
</dbReference>
<dbReference type="PRINTS" id="PR00148">
    <property type="entry name" value="ENOLASE"/>
</dbReference>
<dbReference type="SFLD" id="SFLDS00001">
    <property type="entry name" value="Enolase"/>
    <property type="match status" value="1"/>
</dbReference>
<dbReference type="SFLD" id="SFLDF00002">
    <property type="entry name" value="enolase"/>
    <property type="match status" value="1"/>
</dbReference>
<dbReference type="SMART" id="SM01192">
    <property type="entry name" value="Enolase_C"/>
    <property type="match status" value="1"/>
</dbReference>
<dbReference type="SMART" id="SM01193">
    <property type="entry name" value="Enolase_N"/>
    <property type="match status" value="1"/>
</dbReference>
<dbReference type="SUPFAM" id="SSF51604">
    <property type="entry name" value="Enolase C-terminal domain-like"/>
    <property type="match status" value="1"/>
</dbReference>
<dbReference type="SUPFAM" id="SSF54826">
    <property type="entry name" value="Enolase N-terminal domain-like"/>
    <property type="match status" value="1"/>
</dbReference>
<dbReference type="PROSITE" id="PS00164">
    <property type="entry name" value="ENOLASE"/>
    <property type="match status" value="1"/>
</dbReference>
<organism>
    <name type="scientific">Methanosphaera stadtmanae (strain ATCC 43021 / DSM 3091 / JCM 11832 / MCB-3)</name>
    <dbReference type="NCBI Taxonomy" id="339860"/>
    <lineage>
        <taxon>Archaea</taxon>
        <taxon>Methanobacteriati</taxon>
        <taxon>Methanobacteriota</taxon>
        <taxon>Methanomada group</taxon>
        <taxon>Methanobacteria</taxon>
        <taxon>Methanobacteriales</taxon>
        <taxon>Methanobacteriaceae</taxon>
        <taxon>Methanosphaera</taxon>
    </lineage>
</organism>
<evidence type="ECO:0000255" key="1">
    <source>
        <dbReference type="HAMAP-Rule" id="MF_00318"/>
    </source>
</evidence>
<gene>
    <name evidence="1" type="primary">eno</name>
    <name type="ordered locus">Msp_0862</name>
</gene>
<name>ENO_METST</name>
<feature type="chain" id="PRO_0000267143" description="Enolase">
    <location>
        <begin position="1"/>
        <end position="414"/>
    </location>
</feature>
<feature type="active site" description="Proton donor" evidence="1">
    <location>
        <position position="200"/>
    </location>
</feature>
<feature type="active site" description="Proton acceptor" evidence="1">
    <location>
        <position position="333"/>
    </location>
</feature>
<feature type="binding site" evidence="1">
    <location>
        <position position="156"/>
    </location>
    <ligand>
        <name>(2R)-2-phosphoglycerate</name>
        <dbReference type="ChEBI" id="CHEBI:58289"/>
    </ligand>
</feature>
<feature type="binding site" evidence="1">
    <location>
        <position position="236"/>
    </location>
    <ligand>
        <name>Mg(2+)</name>
        <dbReference type="ChEBI" id="CHEBI:18420"/>
    </ligand>
</feature>
<feature type="binding site" evidence="1">
    <location>
        <position position="281"/>
    </location>
    <ligand>
        <name>Mg(2+)</name>
        <dbReference type="ChEBI" id="CHEBI:18420"/>
    </ligand>
</feature>
<feature type="binding site" evidence="1">
    <location>
        <position position="308"/>
    </location>
    <ligand>
        <name>Mg(2+)</name>
        <dbReference type="ChEBI" id="CHEBI:18420"/>
    </ligand>
</feature>
<feature type="binding site" evidence="1">
    <location>
        <position position="333"/>
    </location>
    <ligand>
        <name>(2R)-2-phosphoglycerate</name>
        <dbReference type="ChEBI" id="CHEBI:58289"/>
    </ligand>
</feature>
<feature type="binding site" evidence="1">
    <location>
        <position position="362"/>
    </location>
    <ligand>
        <name>(2R)-2-phosphoglycerate</name>
        <dbReference type="ChEBI" id="CHEBI:58289"/>
    </ligand>
</feature>
<feature type="binding site" evidence="1">
    <location>
        <position position="363"/>
    </location>
    <ligand>
        <name>(2R)-2-phosphoglycerate</name>
        <dbReference type="ChEBI" id="CHEBI:58289"/>
    </ligand>
</feature>
<feature type="binding site" evidence="1">
    <location>
        <position position="384"/>
    </location>
    <ligand>
        <name>(2R)-2-phosphoglycerate</name>
        <dbReference type="ChEBI" id="CHEBI:58289"/>
    </ligand>
</feature>
<sequence length="414" mass="44699">MDSVIEDVRLRKIIDSRGNPTVEADVLTWNGFGRAAAPSGASTGINEVTSFPDGGVDQVITDVEDLISSEIIGMEAEDIREIDNVLKEIDGTDNFSTIGGNTAVAVSMATAKAAASSYNLPLYKFLGGIMPTQIPFPLGNMINGGAHAGTNAPDIQEFLVIPVGASNITEAITTNINVHRRIKAKIQEKDKTFTGGKGDEGGWAPNLTNEEALEIQFTSCEEVSDETGVLVKPGLDVASSEFWNEKEQKYVYEREGTSRTVEEQIDYIADLIDTYKFFYVEDPIQENDFEAFAELTSKSGKDCLICGDDLFVTNAEILAKGIEAHAGNSLIIKPNQIGTLTDTYNTIKLAKANKYVPVVSHRSGETTDETIAHLAVAFNAPIIKTGAAGGERIAKLNELVRIEEELLNPSMADL</sequence>
<accession>Q2NG02</accession>
<protein>
    <recommendedName>
        <fullName evidence="1">Enolase</fullName>
        <ecNumber evidence="1">4.2.1.11</ecNumber>
    </recommendedName>
    <alternativeName>
        <fullName evidence="1">2-phospho-D-glycerate hydro-lyase</fullName>
    </alternativeName>
    <alternativeName>
        <fullName evidence="1">2-phosphoglycerate dehydratase</fullName>
    </alternativeName>
</protein>
<comment type="function">
    <text evidence="1">Catalyzes the reversible conversion of 2-phosphoglycerate (2-PG) into phosphoenolpyruvate (PEP). It is essential for the degradation of carbohydrates via glycolysis.</text>
</comment>
<comment type="catalytic activity">
    <reaction evidence="1">
        <text>(2R)-2-phosphoglycerate = phosphoenolpyruvate + H2O</text>
        <dbReference type="Rhea" id="RHEA:10164"/>
        <dbReference type="ChEBI" id="CHEBI:15377"/>
        <dbReference type="ChEBI" id="CHEBI:58289"/>
        <dbReference type="ChEBI" id="CHEBI:58702"/>
        <dbReference type="EC" id="4.2.1.11"/>
    </reaction>
</comment>
<comment type="cofactor">
    <cofactor evidence="1">
        <name>Mg(2+)</name>
        <dbReference type="ChEBI" id="CHEBI:18420"/>
    </cofactor>
    <text evidence="1">Binds a second Mg(2+) ion via substrate during catalysis.</text>
</comment>
<comment type="pathway">
    <text evidence="1">Carbohydrate degradation; glycolysis; pyruvate from D-glyceraldehyde 3-phosphate: step 4/5.</text>
</comment>
<comment type="subcellular location">
    <subcellularLocation>
        <location evidence="1">Cytoplasm</location>
    </subcellularLocation>
    <subcellularLocation>
        <location evidence="1">Secreted</location>
    </subcellularLocation>
    <subcellularLocation>
        <location evidence="1">Cell surface</location>
    </subcellularLocation>
    <text evidence="1">Fractions of enolase are present in both the cytoplasm and on the cell surface.</text>
</comment>
<comment type="similarity">
    <text evidence="1">Belongs to the enolase family.</text>
</comment>
<proteinExistence type="inferred from homology"/>
<keyword id="KW-0963">Cytoplasm</keyword>
<keyword id="KW-0324">Glycolysis</keyword>
<keyword id="KW-0456">Lyase</keyword>
<keyword id="KW-0460">Magnesium</keyword>
<keyword id="KW-0479">Metal-binding</keyword>
<keyword id="KW-1185">Reference proteome</keyword>
<keyword id="KW-0964">Secreted</keyword>
<reference key="1">
    <citation type="journal article" date="2006" name="J. Bacteriol.">
        <title>The genome sequence of Methanosphaera stadtmanae reveals why this human intestinal archaeon is restricted to methanol and H2 for methane formation and ATP synthesis.</title>
        <authorList>
            <person name="Fricke W.F."/>
            <person name="Seedorf H."/>
            <person name="Henne A."/>
            <person name="Kruer M."/>
            <person name="Liesegang H."/>
            <person name="Hedderich R."/>
            <person name="Gottschalk G."/>
            <person name="Thauer R.K."/>
        </authorList>
    </citation>
    <scope>NUCLEOTIDE SEQUENCE [LARGE SCALE GENOMIC DNA]</scope>
    <source>
        <strain>ATCC 43021 / DSM 3091 / JCM 11832 / MCB-3</strain>
    </source>
</reference>